<dbReference type="EMBL" id="V01102">
    <property type="protein sequence ID" value="CAA24288.1"/>
    <property type="molecule type" value="Genomic_RNA"/>
</dbReference>
<dbReference type="EMBL" id="DQ508933">
    <property type="protein sequence ID" value="ABF21224.1"/>
    <property type="molecule type" value="Genomic_RNA"/>
</dbReference>
<dbReference type="PIR" id="A04088">
    <property type="entry name" value="MNIV1A"/>
</dbReference>
<dbReference type="PDB" id="1AIL">
    <property type="method" value="X-ray"/>
    <property type="resolution" value="1.90 A"/>
    <property type="chains" value="A=1-72"/>
</dbReference>
<dbReference type="PDB" id="1NS1">
    <property type="method" value="NMR"/>
    <property type="chains" value="A/B=1-73"/>
</dbReference>
<dbReference type="PDB" id="2KKZ">
    <property type="method" value="NMR"/>
    <property type="chains" value="A=85-215"/>
</dbReference>
<dbReference type="PDB" id="2RHK">
    <property type="method" value="X-ray"/>
    <property type="resolution" value="1.95 A"/>
    <property type="chains" value="A/B=85-215"/>
</dbReference>
<dbReference type="PDB" id="3EE8">
    <property type="method" value="X-ray"/>
    <property type="resolution" value="2.60 A"/>
    <property type="chains" value="A/B=84-205"/>
</dbReference>
<dbReference type="PDB" id="3EE9">
    <property type="method" value="X-ray"/>
    <property type="resolution" value="2.14 A"/>
    <property type="chains" value="A/B=84-205"/>
</dbReference>
<dbReference type="PDB" id="3KWG">
    <property type="method" value="X-ray"/>
    <property type="resolution" value="2.21 A"/>
    <property type="chains" value="A/B=78-205"/>
</dbReference>
<dbReference type="PDB" id="3KWI">
    <property type="method" value="X-ray"/>
    <property type="resolution" value="2.21 A"/>
    <property type="chains" value="A/B=78-205"/>
</dbReference>
<dbReference type="PDB" id="4NW2">
    <property type="method" value="X-ray"/>
    <property type="resolution" value="1.90 A"/>
    <property type="chains" value="B/D=216-230"/>
</dbReference>
<dbReference type="PDB" id="4O45">
    <property type="method" value="X-ray"/>
    <property type="resolution" value="1.87 A"/>
    <property type="chains" value="B=216-230"/>
</dbReference>
<dbReference type="PDBsum" id="1AIL"/>
<dbReference type="PDBsum" id="1NS1"/>
<dbReference type="PDBsum" id="2KKZ"/>
<dbReference type="PDBsum" id="2RHK"/>
<dbReference type="PDBsum" id="3EE8"/>
<dbReference type="PDBsum" id="3EE9"/>
<dbReference type="PDBsum" id="3KWG"/>
<dbReference type="PDBsum" id="3KWI"/>
<dbReference type="PDBsum" id="4NW2"/>
<dbReference type="PDBsum" id="4O45"/>
<dbReference type="BMRB" id="P03495"/>
<dbReference type="SMR" id="P03495"/>
<dbReference type="DIP" id="DIP-46282N"/>
<dbReference type="ELM" id="P03495"/>
<dbReference type="IntAct" id="P03495">
    <property type="interactions" value="61"/>
</dbReference>
<dbReference type="MINT" id="P03495"/>
<dbReference type="EvolutionaryTrace" id="P03495"/>
<dbReference type="Proteomes" id="UP000153055">
    <property type="component" value="Genome"/>
</dbReference>
<dbReference type="GO" id="GO:0030430">
    <property type="term" value="C:host cell cytoplasm"/>
    <property type="evidence" value="ECO:0007669"/>
    <property type="project" value="UniProtKB-SubCell"/>
</dbReference>
<dbReference type="GO" id="GO:0042025">
    <property type="term" value="C:host cell nucleus"/>
    <property type="evidence" value="ECO:0007669"/>
    <property type="project" value="UniProtKB-SubCell"/>
</dbReference>
<dbReference type="GO" id="GO:0003725">
    <property type="term" value="F:double-stranded RNA binding"/>
    <property type="evidence" value="ECO:0000304"/>
    <property type="project" value="BHF-UCL"/>
</dbReference>
<dbReference type="GO" id="GO:0042802">
    <property type="term" value="F:identical protein binding"/>
    <property type="evidence" value="ECO:0000353"/>
    <property type="project" value="IntAct"/>
</dbReference>
<dbReference type="GO" id="GO:0030291">
    <property type="term" value="F:protein serine/threonine kinase inhibitor activity"/>
    <property type="evidence" value="ECO:0007669"/>
    <property type="project" value="UniProtKB-KW"/>
</dbReference>
<dbReference type="GO" id="GO:0005102">
    <property type="term" value="F:signaling receptor binding"/>
    <property type="evidence" value="ECO:0000353"/>
    <property type="project" value="BHF-UCL"/>
</dbReference>
<dbReference type="GO" id="GO:0030547">
    <property type="term" value="F:signaling receptor inhibitor activity"/>
    <property type="evidence" value="ECO:0000314"/>
    <property type="project" value="BHF-UCL"/>
</dbReference>
<dbReference type="GO" id="GO:0039540">
    <property type="term" value="P:symbiont-mediated suppression of host cytoplasmic pattern recognition receptor signaling pathway via inhibition of RIG-I activity"/>
    <property type="evidence" value="ECO:0000314"/>
    <property type="project" value="BHF-UCL"/>
</dbReference>
<dbReference type="GO" id="GO:0039657">
    <property type="term" value="P:symbiont-mediated suppression of host gene expression"/>
    <property type="evidence" value="ECO:0007669"/>
    <property type="project" value="UniProtKB-KW"/>
</dbReference>
<dbReference type="GO" id="GO:0052170">
    <property type="term" value="P:symbiont-mediated suppression of host innate immune response"/>
    <property type="evidence" value="ECO:0000314"/>
    <property type="project" value="BHF-UCL"/>
</dbReference>
<dbReference type="GO" id="GO:0039524">
    <property type="term" value="P:symbiont-mediated suppression of host mRNA processing"/>
    <property type="evidence" value="ECO:0007669"/>
    <property type="project" value="UniProtKB-KW"/>
</dbReference>
<dbReference type="GO" id="GO:0039580">
    <property type="term" value="P:symbiont-mediated suppression of host PKR/eIFalpha signaling"/>
    <property type="evidence" value="ECO:0007669"/>
    <property type="project" value="UniProtKB-KW"/>
</dbReference>
<dbReference type="GO" id="GO:0039502">
    <property type="term" value="P:symbiont-mediated suppression of host type I interferon-mediated signaling pathway"/>
    <property type="evidence" value="ECO:0007669"/>
    <property type="project" value="UniProtKB-KW"/>
</dbReference>
<dbReference type="FunFam" id="1.10.287.10:FF:000001">
    <property type="entry name" value="Non-structural protein 1"/>
    <property type="match status" value="1"/>
</dbReference>
<dbReference type="FunFam" id="3.30.420.330:FF:000001">
    <property type="entry name" value="Non-structural protein 1"/>
    <property type="match status" value="1"/>
</dbReference>
<dbReference type="Gene3D" id="3.30.420.330">
    <property type="entry name" value="Influenza virus non-structural protein, effector domain"/>
    <property type="match status" value="1"/>
</dbReference>
<dbReference type="Gene3D" id="1.10.287.10">
    <property type="entry name" value="S15/NS1, RNA-binding"/>
    <property type="match status" value="1"/>
</dbReference>
<dbReference type="HAMAP" id="MF_04066">
    <property type="entry name" value="INFV_NS1"/>
    <property type="match status" value="1"/>
</dbReference>
<dbReference type="InterPro" id="IPR004208">
    <property type="entry name" value="NS1"/>
</dbReference>
<dbReference type="InterPro" id="IPR000256">
    <property type="entry name" value="NS1A"/>
</dbReference>
<dbReference type="InterPro" id="IPR038064">
    <property type="entry name" value="NS1A_effect_dom-like_sf"/>
</dbReference>
<dbReference type="InterPro" id="IPR009068">
    <property type="entry name" value="uS15_NS1_RNA-bd_sf"/>
</dbReference>
<dbReference type="Pfam" id="PF00600">
    <property type="entry name" value="Flu_NS1"/>
    <property type="match status" value="1"/>
</dbReference>
<dbReference type="SUPFAM" id="SSF143021">
    <property type="entry name" value="Ns1 effector domain-like"/>
    <property type="match status" value="1"/>
</dbReference>
<dbReference type="SUPFAM" id="SSF47060">
    <property type="entry name" value="S15/NS1 RNA-binding domain"/>
    <property type="match status" value="1"/>
</dbReference>
<accession>P03495</accession>
<accession>Q1K9D5</accession>
<protein>
    <recommendedName>
        <fullName evidence="1">Non-structural protein 1</fullName>
        <shortName evidence="1">NS1</shortName>
    </recommendedName>
    <alternativeName>
        <fullName evidence="1">NS1A</fullName>
    </alternativeName>
</protein>
<proteinExistence type="evidence at protein level"/>
<name>NS1_I72A2</name>
<organismHost>
    <name type="scientific">Aves</name>
    <dbReference type="NCBI Taxonomy" id="8782"/>
</organismHost>
<organismHost>
    <name type="scientific">Cetacea</name>
    <name type="common">whales</name>
    <dbReference type="NCBI Taxonomy" id="9721"/>
</organismHost>
<organismHost>
    <name type="scientific">Homo sapiens</name>
    <name type="common">Human</name>
    <dbReference type="NCBI Taxonomy" id="9606"/>
</organismHost>
<organismHost>
    <name type="scientific">Phocidae</name>
    <name type="common">true seals</name>
    <dbReference type="NCBI Taxonomy" id="9709"/>
</organismHost>
<organismHost>
    <name type="scientific">Sus scrofa</name>
    <name type="common">Pig</name>
    <dbReference type="NCBI Taxonomy" id="9823"/>
</organismHost>
<evidence type="ECO:0000255" key="1">
    <source>
        <dbReference type="HAMAP-Rule" id="MF_04066"/>
    </source>
</evidence>
<evidence type="ECO:0000256" key="2">
    <source>
        <dbReference type="SAM" id="MobiDB-lite"/>
    </source>
</evidence>
<evidence type="ECO:0000269" key="3">
    <source>
    </source>
</evidence>
<evidence type="ECO:0000269" key="4">
    <source>
    </source>
</evidence>
<evidence type="ECO:0000269" key="5">
    <source>
    </source>
</evidence>
<evidence type="ECO:0000269" key="6">
    <source>
    </source>
</evidence>
<evidence type="ECO:0000269" key="7">
    <source>
    </source>
</evidence>
<evidence type="ECO:0000269" key="8">
    <source>
    </source>
</evidence>
<evidence type="ECO:0000269" key="9">
    <source>
    </source>
</evidence>
<evidence type="ECO:0007829" key="10">
    <source>
        <dbReference type="PDB" id="1AIL"/>
    </source>
</evidence>
<evidence type="ECO:0007829" key="11">
    <source>
        <dbReference type="PDB" id="2KKZ"/>
    </source>
</evidence>
<evidence type="ECO:0007829" key="12">
    <source>
        <dbReference type="PDB" id="2RHK"/>
    </source>
</evidence>
<evidence type="ECO:0007829" key="13">
    <source>
        <dbReference type="PDB" id="3KWI"/>
    </source>
</evidence>
<feature type="chain" id="PRO_0000078952" description="Non-structural protein 1">
    <location>
        <begin position="1"/>
        <end position="237"/>
    </location>
</feature>
<feature type="region of interest" description="RNA-binding and homodimerization" evidence="1">
    <location>
        <begin position="1"/>
        <end position="73"/>
    </location>
</feature>
<feature type="region of interest" description="CPSF4-binding" evidence="1">
    <location>
        <begin position="180"/>
        <end position="215"/>
    </location>
</feature>
<feature type="region of interest" description="Disordered" evidence="2">
    <location>
        <begin position="205"/>
        <end position="237"/>
    </location>
</feature>
<feature type="region of interest" description="PABPN1-binding">
    <location>
        <begin position="223"/>
        <end position="237"/>
    </location>
</feature>
<feature type="region of interest" description="PABPN1-binding" evidence="1">
    <location>
        <begin position="223"/>
        <end position="230"/>
    </location>
</feature>
<feature type="short sequence motif" description="Nuclear localization signal" evidence="1">
    <location>
        <begin position="34"/>
        <end position="38"/>
    </location>
</feature>
<feature type="short sequence motif" description="Nuclear localization signal 1">
    <location>
        <begin position="34"/>
        <end position="38"/>
    </location>
</feature>
<feature type="short sequence motif" description="Nuclear export signal" evidence="1">
    <location>
        <begin position="137"/>
        <end position="146"/>
    </location>
</feature>
<feature type="short sequence motif" description="Nuclear localization signal 2">
    <location>
        <begin position="216"/>
        <end position="221"/>
    </location>
</feature>
<feature type="compositionally biased region" description="Basic residues" evidence="2">
    <location>
        <begin position="217"/>
        <end position="237"/>
    </location>
</feature>
<feature type="mutagenesis site" description="No effect on nuclear mRNA export inhibition." evidence="6">
    <original>SS</original>
    <variation>AA</variation>
    <location>
        <begin position="7"/>
        <end position="8"/>
    </location>
</feature>
<feature type="mutagenesis site" description="Complete loss of nuclear mRNA export inhibition." evidence="6">
    <original>SS</original>
    <variation>DL</variation>
    <location>
        <begin position="7"/>
        <end position="8"/>
    </location>
</feature>
<feature type="mutagenesis site" description="Complete loss of nuclear mRNA export inhibition." evidence="6">
    <original>RK</original>
    <variation>AA</variation>
    <variation>DL</variation>
    <location>
        <begin position="19"/>
        <end position="20"/>
    </location>
</feature>
<feature type="mutagenesis site" description="Complete loss of nuclear mRNA export inhibition." evidence="6">
    <original>PF</original>
    <variation>AA</variation>
    <location>
        <begin position="31"/>
        <end position="32"/>
    </location>
</feature>
<feature type="mutagenesis site" description="75% loss of nuclear mRNA export inhibition." evidence="6">
    <original>RLRR</original>
    <variation>ALAA</variation>
    <location>
        <begin position="35"/>
        <end position="38"/>
    </location>
</feature>
<feature type="mutagenesis site" description="No effect on nuclear mRNA export inhibition." evidence="6">
    <original>DQ</original>
    <variation>AA</variation>
    <location>
        <begin position="39"/>
        <end position="40"/>
    </location>
</feature>
<feature type="mutagenesis site" description="No effect on nuclear mRNA export inhibition." evidence="6">
    <original>ST</original>
    <variation>DL</variation>
    <location>
        <begin position="48"/>
        <end position="49"/>
    </location>
</feature>
<feature type="mutagenesis site" description="No effect on nuclear mRNA export inhibition." evidence="6">
    <original>KQ</original>
    <variation>AA</variation>
    <location>
        <begin position="62"/>
        <end position="63"/>
    </location>
</feature>
<feature type="mutagenesis site" description="Complete loss of nuclear mRNA export inhibition." evidence="6">
    <original>KQ</original>
    <variation>DL</variation>
    <location>
        <begin position="62"/>
        <end position="63"/>
    </location>
</feature>
<feature type="mutagenesis site" description="No effect on nuclear mRNA export inhibition." evidence="6">
    <original>SD</original>
    <variation>DL</variation>
    <location>
        <begin position="73"/>
        <end position="74"/>
    </location>
</feature>
<feature type="mutagenesis site" description="No effect on nuclear mRNA export inhibition." evidence="6">
    <original>SR</original>
    <variation>DL</variation>
    <location>
        <begin position="87"/>
        <end position="88"/>
    </location>
</feature>
<feature type="mutagenesis site" description="No effect on nuclear mRNA export inhibition." evidence="6">
    <original>SR</original>
    <variation>DL</variation>
    <location>
        <begin position="99"/>
        <end position="100"/>
    </location>
</feature>
<feature type="mutagenesis site" description="No effect on nuclear mRNA export inhibition." evidence="6">
    <original>CI</original>
    <variation>DL</variation>
    <location>
        <begin position="116"/>
        <end position="117"/>
    </location>
</feature>
<feature type="mutagenesis site" description="Complete loss of nuclear mRNA export inhibition." evidence="6">
    <original>FSV</original>
    <variation>AAA</variation>
    <variation>LDL</variation>
    <location>
        <begin position="134"/>
        <end position="136"/>
    </location>
</feature>
<feature type="mutagenesis site" description="No effect on nuclear mRNA export inhibition." evidence="6">
    <original>L</original>
    <variation>A</variation>
    <location>
        <position position="141"/>
    </location>
</feature>
<feature type="mutagenesis site" description="Complete loss of nuclear mRNA export inhibition." evidence="6">
    <original>L</original>
    <variation>A</variation>
    <location>
        <position position="144"/>
    </location>
</feature>
<feature type="mutagenesis site" description="Complete loss of nuclear mRNA export inhibition." evidence="6">
    <original>L</original>
    <variation>A</variation>
    <location>
        <position position="146"/>
    </location>
</feature>
<feature type="mutagenesis site" description="Complete loss of nuclear mRNA export inhibition." evidence="6">
    <original>FT</original>
    <variation>AA</variation>
    <variation>DL</variation>
    <location>
        <begin position="150"/>
        <end position="151"/>
    </location>
</feature>
<feature type="mutagenesis site" description="Complete loss of nuclear mRNA export inhibition." evidence="6">
    <original>IS</original>
    <variation>AA</variation>
    <variation>DL</variation>
    <location>
        <begin position="160"/>
        <end position="161"/>
    </location>
</feature>
<feature type="mutagenesis site" description="No effect on nuclear mRNA export inhibition." evidence="6">
    <original>KN</original>
    <variation>AA</variation>
    <location>
        <begin position="175"/>
        <end position="176"/>
    </location>
</feature>
<feature type="mutagenesis site" description="Complete loss of CPSF4 binding." evidence="4">
    <original>EW</original>
    <variation>AS</variation>
    <location>
        <begin position="186"/>
        <end position="187"/>
    </location>
</feature>
<feature type="mutagenesis site" description="No effect on nuclear mRNA export inhibition." evidence="6">
    <original>QR</original>
    <variation>AA</variation>
    <location>
        <begin position="199"/>
        <end position="200"/>
    </location>
</feature>
<feature type="mutagenesis site" description="No effect on CPSF4 binding." evidence="4">
    <original>FAW</original>
    <variation>AAA</variation>
    <location>
        <begin position="201"/>
        <end position="203"/>
    </location>
</feature>
<feature type="mutagenesis site" description="No effect on nuclear mRNA export inhibition." evidence="6">
    <original>SS</original>
    <variation>AA</variation>
    <location>
        <begin position="205"/>
        <end position="206"/>
    </location>
</feature>
<feature type="mutagenesis site" description="No effect on CPSF4 binding." evidence="4">
    <original>PP</original>
    <variation>AA</variation>
    <location>
        <begin position="212"/>
        <end position="213"/>
    </location>
</feature>
<feature type="mutagenesis site" description="No effect on nuclear mRNA export inhibition." evidence="6">
    <original>KRK</original>
    <variation>ARA</variation>
    <location>
        <begin position="219"/>
        <end position="221"/>
    </location>
</feature>
<feature type="helix" evidence="10">
    <location>
        <begin position="3"/>
        <end position="24"/>
    </location>
</feature>
<feature type="helix" evidence="10">
    <location>
        <begin position="30"/>
        <end position="50"/>
    </location>
</feature>
<feature type="helix" evidence="10">
    <location>
        <begin position="54"/>
        <end position="69"/>
    </location>
</feature>
<feature type="strand" evidence="12">
    <location>
        <begin position="88"/>
        <end position="91"/>
    </location>
</feature>
<feature type="helix" evidence="12">
    <location>
        <begin position="95"/>
        <end position="99"/>
    </location>
</feature>
<feature type="strand" evidence="12">
    <location>
        <begin position="105"/>
        <end position="112"/>
    </location>
</feature>
<feature type="strand" evidence="12">
    <location>
        <begin position="115"/>
        <end position="120"/>
    </location>
</feature>
<feature type="strand" evidence="12">
    <location>
        <begin position="127"/>
        <end position="137"/>
    </location>
</feature>
<feature type="strand" evidence="12">
    <location>
        <begin position="140"/>
        <end position="151"/>
    </location>
</feature>
<feature type="strand" evidence="12">
    <location>
        <begin position="156"/>
        <end position="162"/>
    </location>
</feature>
<feature type="strand" evidence="13">
    <location>
        <begin position="164"/>
        <end position="166"/>
    </location>
</feature>
<feature type="helix" evidence="12">
    <location>
        <begin position="171"/>
        <end position="187"/>
    </location>
</feature>
<feature type="strand" evidence="12">
    <location>
        <begin position="191"/>
        <end position="194"/>
    </location>
</feature>
<feature type="helix" evidence="12">
    <location>
        <begin position="196"/>
        <end position="201"/>
    </location>
</feature>
<feature type="turn" evidence="11">
    <location>
        <begin position="202"/>
        <end position="205"/>
    </location>
</feature>
<keyword id="KW-0002">3D-structure</keyword>
<keyword id="KW-0025">Alternative splicing</keyword>
<keyword id="KW-1262">Eukaryotic host gene expression shutoff by virus</keyword>
<keyword id="KW-1035">Host cytoplasm</keyword>
<keyword id="KW-1190">Host gene expression shutoff by virus</keyword>
<keyword id="KW-1192">Host mRNA suppression by virus</keyword>
<keyword id="KW-1048">Host nucleus</keyword>
<keyword id="KW-0945">Host-virus interaction</keyword>
<keyword id="KW-1090">Inhibition of host innate immune response by virus</keyword>
<keyword id="KW-1114">Inhibition of host interferon signaling pathway by virus</keyword>
<keyword id="KW-1102">Inhibition of host PKR by virus</keyword>
<keyword id="KW-1103">Inhibition of host pre-mRNA processing by virus</keyword>
<keyword id="KW-1088">Inhibition of host RIG-I by virus</keyword>
<keyword id="KW-1113">Inhibition of host RLR pathway by virus</keyword>
<keyword id="KW-0922">Interferon antiviral system evasion</keyword>
<keyword id="KW-0694">RNA-binding</keyword>
<keyword id="KW-0832">Ubl conjugation</keyword>
<keyword id="KW-0899">Viral immunoevasion</keyword>
<organism>
    <name type="scientific">Influenza A virus (strain A/Udorn/307/1972 H3N2)</name>
    <dbReference type="NCBI Taxonomy" id="381517"/>
    <lineage>
        <taxon>Viruses</taxon>
        <taxon>Riboviria</taxon>
        <taxon>Orthornavirae</taxon>
        <taxon>Negarnaviricota</taxon>
        <taxon>Polyploviricotina</taxon>
        <taxon>Insthoviricetes</taxon>
        <taxon>Articulavirales</taxon>
        <taxon>Orthomyxoviridae</taxon>
        <taxon>Alphainfluenzavirus</taxon>
        <taxon>Alphainfluenzavirus influenzae</taxon>
        <taxon>Influenza A virus</taxon>
    </lineage>
</organism>
<sequence>MDSNTVSSFQVDCFLWHVRKQVVDQELGDAPFLDRLRRDQKSLRGRGSTLGLNIEAATHVGKQIVEKILKEESDEALKMTMASTPASRYITDMTIEELSRDWFMLMPKQKVEGPLCIRIDQAIMDKNIMLKANFSVIFDRLETLILLRAFTEEGAIVGEISPLPSFPGHTIEDVKNAIGVLIGGLEWNDNTVRVSKTLQRFAWGSSNENGRPPLTPKQKRKMARTARSKVRRDKMAD</sequence>
<gene>
    <name evidence="1" type="primary">NS</name>
</gene>
<reference key="1">
    <citation type="journal article" date="1980" name="Cell">
        <title>Sequence of interrupted and uninterrupted mRNAs and cloned DNA coding for the two overlapping nonstructural proteins of influenza virus.</title>
        <authorList>
            <person name="Lamb R.A."/>
            <person name="Lai C.-J."/>
        </authorList>
    </citation>
    <scope>NUCLEOTIDE SEQUENCE [GENOMIC RNA]</scope>
</reference>
<reference key="2">
    <citation type="submission" date="2006-04" db="EMBL/GenBank/DDBJ databases">
        <title>Complete genome sequencing and analysis of selected influenza virus vaccine strains spanning six decades (1933-1999).</title>
        <authorList>
            <person name="Mbawuike I.N."/>
            <person name="Zhang Y."/>
            <person name="Yamada R.E."/>
            <person name="Nino D."/>
            <person name="Bui H.-H."/>
            <person name="Sette A."/>
            <person name="Couch R.B."/>
        </authorList>
    </citation>
    <scope>NUCLEOTIDE SEQUENCE [GENOMIC RNA]</scope>
</reference>
<reference key="3">
    <citation type="journal article" date="1994" name="J. Virol.">
        <title>Two functional domains of the influenza virus NS1 protein are required for regulation of nuclear export of mRNA.</title>
        <authorList>
            <person name="Qian X.Y."/>
            <person name="Alonso-Caplen F."/>
            <person name="Krug R.M."/>
        </authorList>
    </citation>
    <scope>MUTAGENESIS OF 7-SER-SER-8; 19-ARG-PHE-20; 31-PRO-PHE-32; 35-ARG--ARG-38; 39-ASP-GLN-40; 48-SER-THR-49; 62-LYS-GLN-63; 73-SER-ASP-74; 87-SER-ARG-88; 99-SER-ARG-100; 116-CYS-ILE-117; 134-PHE--VAL-136; LEU-141; LEU-144; LEU-146; 150-PHE-THR-151; 160-ILE-SER-161; 175-LYS-ASN-176; 199-GLN-ARG-200; 205-SER-SER-206 AND 219-LYS-LYS-221</scope>
</reference>
<reference key="4">
    <citation type="journal article" date="1995" name="Virology">
        <title>The influenza virus NS1 protein forms multimers in vitro and in vivo.</title>
        <authorList>
            <person name="Nemeroff M.E."/>
            <person name="Qian X.Y."/>
            <person name="Krug R.M."/>
        </authorList>
    </citation>
    <scope>DIMERIZATION</scope>
</reference>
<reference key="5">
    <citation type="journal article" date="1996" name="Virology">
        <title>The RNA-binding and effector domains of the viral NS1 protein are conserved to different extents among influenza A and B viruses.</title>
        <authorList>
            <person name="Wang W."/>
            <person name="Krug R.M."/>
        </authorList>
    </citation>
    <scope>RNA-BINDING</scope>
</reference>
<reference key="6">
    <citation type="journal article" date="1998" name="Mol. Cell">
        <title>Influenza virus NS1 protein interacts with the cellular 30 kDa subunit of CPSF and inhibits 3'end formation of cellular pre-mRNAs.</title>
        <authorList>
            <person name="Nemeroff M.E."/>
            <person name="Barabino S.M.L."/>
            <person name="Li Y."/>
            <person name="Keller W."/>
            <person name="Krug R.M."/>
        </authorList>
    </citation>
    <scope>FUNCTION</scope>
    <scope>INTERACTION WITH HUMAN CPSF4</scope>
</reference>
<reference key="7">
    <citation type="journal article" date="1998" name="J. Interferon Cytokine Res.">
        <title>Biochemical and genetic evidence for complex formation between the influenza A virus NS1 protein and the interferon-induced PKR protein kinase.</title>
        <authorList>
            <person name="Tan S.L."/>
            <person name="Katze M.G."/>
        </authorList>
    </citation>
    <scope>INTERACTION WITH HUMAN EIF2AK2/PKR</scope>
</reference>
<reference key="8">
    <citation type="journal article" date="1998" name="Proc. Natl. Acad. Sci. U.S.A.">
        <title>Regulation of a nuclear export signal by an adjacent inhibitory sequence: the effector domain of the influenza virus NS1 protein.</title>
        <authorList>
            <person name="Li Y."/>
            <person name="Yamakita Y."/>
            <person name="Krug R.M."/>
        </authorList>
    </citation>
    <scope>FUNCTION</scope>
</reference>
<reference key="9">
    <citation type="journal article" date="1999" name="EMBO J.">
        <title>Influenza A virus NS1 protein targets poly(A)-binding protein II of the cellular 3'-end processing machinery.</title>
        <authorList>
            <person name="Chen Z."/>
            <person name="Li Y."/>
            <person name="Krug R.M."/>
        </authorList>
    </citation>
    <scope>INTERACTION WITH HUMAN PABPN1</scope>
</reference>
<reference key="10">
    <citation type="journal article" date="2001" name="RNA">
        <title>The 3'-end-processing factor CPSF is required for the splicing of single-intron pre-mRNAs in vivo.</title>
        <authorList>
            <person name="Li Y."/>
            <person name="Chen Z.Y."/>
            <person name="Wang W."/>
            <person name="Baker C.C."/>
            <person name="Krug R.M."/>
        </authorList>
    </citation>
    <scope>MUTAGENESIS OF 186-GLU-TRP-187; 201-PHE--TRP-203 AND 212-PRO-PRO-213</scope>
</reference>
<reference key="11">
    <citation type="journal article" date="2003" name="Virology">
        <title>Intracellular warfare between human influenza viruses and human cells: the roles of the viral NS1 protein.</title>
        <authorList>
            <person name="Krug R.M."/>
            <person name="Yuan W."/>
            <person name="Noah D.L."/>
            <person name="Latham A.G."/>
        </authorList>
    </citation>
    <scope>REVIEW</scope>
</reference>
<reference key="12">
    <citation type="journal article" date="2006" name="J. Virol.">
        <title>The CPSF30 binding site on the NS1A protein of influenza A virus is a potential antiviral target.</title>
        <authorList>
            <person name="Twu K.Y."/>
            <person name="Noah D.L."/>
            <person name="Rao P."/>
            <person name="Kuo R.L."/>
            <person name="Krug R.M."/>
        </authorList>
    </citation>
    <scope>FUNCTION</scope>
    <scope>INTERACTION WITH HOST CPSF4</scope>
</reference>
<reference key="13">
    <citation type="journal article" date="1997" name="Nat. Struct. Biol.">
        <title>A novel RNA-binding motif in influenza A virus non-structural protein 1.</title>
        <authorList>
            <person name="Chien C.Y."/>
            <person name="Tejero R."/>
            <person name="Huang Y."/>
            <person name="Zimmerman D.E."/>
            <person name="Rios C.B."/>
            <person name="Krug R.M."/>
            <person name="Montelione G.T."/>
        </authorList>
    </citation>
    <scope>STRUCTURE BY NMR OF 1-73</scope>
</reference>
<reference key="14">
    <citation type="journal article" date="1997" name="Nat. Struct. Biol.">
        <title>Crystal structure of the unique RNA-binding domain of the influenza virus NS1 protein.</title>
        <authorList>
            <person name="Liu J."/>
            <person name="Lynch P.A."/>
            <person name="Chien C.Y."/>
            <person name="Montelione G.T."/>
            <person name="Krug R.M."/>
            <person name="Berman H.M."/>
        </authorList>
    </citation>
    <scope>X-RAY CRYSTALLOGRAPHY (1.9 ANGSTROMS) OF 1-72</scope>
</reference>
<comment type="function">
    <text evidence="1 5 7 8">Inhibits post-transcriptional processing of cellular pre-mRNA, by binding and inhibiting two cellular proteins that are required for the 3'-end processing of cellular pre-mRNAs: the 30 kDa cleavage and polyadenylation specificity factor/CPSF4 and the poly(A)-binding protein 2/PABPN1. In turn, unprocessed 3' end pre-mRNAs accumulate in the host nucleus and are no longer exported to the cytoplasm. Cellular protein synthesis is thereby shut off very early after virus infection. Viral protein synthesis is not affected by the inhibition of the cellular 3' end processing machinery because the poly(A) tails of viral mRNAs are produced by the viral polymerase through a stuttering mechanism. Prevents the establishment of the cellular antiviral state by inhibiting TRIM25-mediated RIGI ubiquitination, which normally triggers the antiviral transduction signal that leads to the activation of type I IFN genes by transcription factors IRF3 and IRF7. Also binds poly(A) and U6 snRNA. Inhibits the integrated stress response (ISR) in the infected cell by blocking dsRNA binding by EIF2AK2/PKR and further phosphorylation of EIF2S1/EIF-2ALPHA. Stress granule formation is thus inhibited, which allows protein synthesis and viral replication.</text>
</comment>
<comment type="subunit">
    <text evidence="1 3 5 8 9">Homodimer. Interacts with host TRIM25 (via coiled coil); this interaction specifically inhibits TRIM25 multimerization and TRIM25-mediated RIGI CARD ubiquitination. Interacts with human EIF2AK2/PKR, CPSF4, IVNS1ABP and PABPN1.</text>
</comment>
<comment type="interaction">
    <interactant intactId="EBI-2548993">
        <id>P03495</id>
    </interactant>
    <interactant intactId="EBI-2548993">
        <id>P03495</id>
        <label>NS</label>
    </interactant>
    <organismsDiffer>false</organismsDiffer>
    <experiments>3</experiments>
</comment>
<comment type="interaction">
    <interactant intactId="EBI-2548993">
        <id>P03495</id>
    </interactant>
    <interactant intactId="EBI-700771">
        <id>Q92934</id>
        <label>BAD</label>
    </interactant>
    <organismsDiffer>true</organismsDiffer>
    <experiments>2</experiments>
</comment>
<comment type="interaction">
    <interactant intactId="EBI-2548993">
        <id>P03495</id>
    </interactant>
    <interactant intactId="EBI-526406">
        <id>O43521</id>
        <label>BCL2L11</label>
    </interactant>
    <organismsDiffer>true</organismsDiffer>
    <experiments>2</experiments>
</comment>
<comment type="interaction">
    <interactant intactId="EBI-2548993">
        <id>P03495</id>
    </interactant>
    <interactant intactId="EBI-15725265">
        <id>O95639-1</id>
        <label>CPSF4</label>
    </interactant>
    <organismsDiffer>true</organismsDiffer>
    <experiments>4</experiments>
</comment>
<comment type="interaction">
    <interactant intactId="EBI-2548993">
        <id>P03495</id>
    </interactant>
    <interactant intactId="EBI-781301">
        <id>O60869</id>
        <label>EDF1</label>
    </interactant>
    <organismsDiffer>true</organismsDiffer>
    <experiments>2</experiments>
</comment>
<comment type="interaction">
    <interactant intactId="EBI-2548993">
        <id>P03495</id>
    </interactant>
    <interactant intactId="EBI-2339540">
        <id>Q9UII4</id>
        <label>HERC5</label>
    </interactant>
    <organismsDiffer>true</organismsDiffer>
    <experiments>3</experiments>
</comment>
<comment type="interaction">
    <interactant intactId="EBI-2548993">
        <id>P03495</id>
    </interactant>
    <interactant intactId="EBI-1031656">
        <id>Q13651</id>
        <label>IL10RA</label>
    </interactant>
    <organismsDiffer>true</organismsDiffer>
    <experiments>2</experiments>
</comment>
<comment type="interaction">
    <interactant intactId="EBI-2548993">
        <id>P03495</id>
    </interactant>
    <interactant intactId="EBI-517592">
        <id>P35568</id>
        <label>IRS1</label>
    </interactant>
    <organismsDiffer>true</organismsDiffer>
    <experiments>2</experiments>
</comment>
<comment type="interaction">
    <interactant intactId="EBI-2548993">
        <id>P03495</id>
    </interactant>
    <interactant intactId="EBI-746466">
        <id>P05161</id>
        <label>ISG15</label>
    </interactant>
    <organismsDiffer>true</organismsDiffer>
    <experiments>4</experiments>
</comment>
<comment type="interaction">
    <interactant intactId="EBI-2548993">
        <id>P03495</id>
    </interactant>
    <interactant intactId="EBI-1053214">
        <id>Q9UBF8</id>
        <label>PI4KB</label>
    </interactant>
    <organismsDiffer>true</organismsDiffer>
    <experiments>2</experiments>
</comment>
<comment type="interaction">
    <interactant intactId="EBI-2548993">
        <id>P03495</id>
    </interactant>
    <interactant intactId="EBI-365996">
        <id>P04049</id>
        <label>RAF1</label>
    </interactant>
    <organismsDiffer>true</organismsDiffer>
    <experiments>2</experiments>
</comment>
<comment type="interaction">
    <interactant intactId="EBI-2548993">
        <id>P03495</id>
    </interactant>
    <interactant intactId="EBI-78835">
        <id>P29353</id>
        <label>SHC1</label>
    </interactant>
    <organismsDiffer>true</organismsDiffer>
    <experiments>2</experiments>
</comment>
<comment type="interaction">
    <interactant intactId="EBI-2548993">
        <id>P03495</id>
    </interactant>
    <interactant intactId="EBI-356349">
        <id>Q92844</id>
        <label>TANK</label>
    </interactant>
    <organismsDiffer>true</organismsDiffer>
    <experiments>2</experiments>
</comment>
<comment type="interaction">
    <interactant intactId="EBI-2548993">
        <id>P03495</id>
    </interactant>
    <interactant intactId="EBI-9116865">
        <id>P55916</id>
        <label>UCP3</label>
    </interactant>
    <organismsDiffer>true</organismsDiffer>
    <experiments>2</experiments>
</comment>
<comment type="subcellular location">
    <subcellularLocation>
        <location evidence="1">Host nucleus</location>
    </subcellularLocation>
    <subcellularLocation>
        <location evidence="1">Host cytoplasm</location>
    </subcellularLocation>
    <text evidence="1">In uninfected, transfected cells, NS1 is localized in the nucleus. Only in virus infected cells, the nuclear export signal is unveiled, presumably by a viral protein, and a fraction of NS1 is exported in the cytoplasm.</text>
</comment>
<comment type="alternative products">
    <event type="alternative splicing"/>
    <isoform>
        <id>P03495-1</id>
        <name>NS1</name>
        <sequence type="displayed"/>
    </isoform>
    <isoform>
        <id>P69258-1</id>
        <name>NEP</name>
        <name>NS2</name>
        <sequence type="external"/>
    </isoform>
</comment>
<comment type="domain">
    <text evidence="1">The dsRNA-binding region is required for suppression of RNA silencing.</text>
</comment>
<comment type="PTM">
    <text evidence="1">Upon interferon induction, ISGylated via host HERC5; this results in the impairment of NS1 interaction with RNA targets due to its inability to form homodimers and to interact with host EIF2AK2/PKR.</text>
</comment>
<comment type="similarity">
    <text evidence="1">Belongs to the influenza A viruses NS1 family.</text>
</comment>